<comment type="function">
    <text evidence="1">Member of the machinery of polarized transport. Required for the indirect transcytotic route at the step of the egress of the transcytosing cargo from perinuclear endosomes in order for it to travel to the apical surface via a raft-dependent pathway (By similarity).</text>
</comment>
<comment type="subunit">
    <text evidence="1">Interacts with TPD52L2.</text>
</comment>
<comment type="subcellular location">
    <subcellularLocation>
        <location evidence="1">Cell membrane</location>
        <topology evidence="1">Multi-pass membrane protein</topology>
    </subcellularLocation>
    <subcellularLocation>
        <location evidence="1">Apical cell membrane</location>
        <topology evidence="1">Multi-pass membrane protein</topology>
    </subcellularLocation>
    <text evidence="1">Associated with lipid rafts. In polarized epithelial cells, restricted to the apical surface (By similarity).</text>
</comment>
<comment type="similarity">
    <text evidence="4">Belongs to the MAL family.</text>
</comment>
<accession>Q5RAI2</accession>
<organism>
    <name type="scientific">Pongo abelii</name>
    <name type="common">Sumatran orangutan</name>
    <name type="synonym">Pongo pygmaeus abelii</name>
    <dbReference type="NCBI Taxonomy" id="9601"/>
    <lineage>
        <taxon>Eukaryota</taxon>
        <taxon>Metazoa</taxon>
        <taxon>Chordata</taxon>
        <taxon>Craniata</taxon>
        <taxon>Vertebrata</taxon>
        <taxon>Euteleostomi</taxon>
        <taxon>Mammalia</taxon>
        <taxon>Eutheria</taxon>
        <taxon>Euarchontoglires</taxon>
        <taxon>Primates</taxon>
        <taxon>Haplorrhini</taxon>
        <taxon>Catarrhini</taxon>
        <taxon>Hominidae</taxon>
        <taxon>Pongo</taxon>
    </lineage>
</organism>
<gene>
    <name type="primary">MAL2</name>
</gene>
<name>MAL2_PONAB</name>
<reference key="1">
    <citation type="submission" date="2004-11" db="EMBL/GenBank/DDBJ databases">
        <authorList>
            <consortium name="The German cDNA consortium"/>
        </authorList>
    </citation>
    <scope>NUCLEOTIDE SEQUENCE [LARGE SCALE MRNA]</scope>
    <source>
        <tissue>Brain cortex</tissue>
    </source>
</reference>
<evidence type="ECO:0000250" key="1"/>
<evidence type="ECO:0000255" key="2"/>
<evidence type="ECO:0000255" key="3">
    <source>
        <dbReference type="PROSITE-ProRule" id="PRU00581"/>
    </source>
</evidence>
<evidence type="ECO:0000305" key="4"/>
<dbReference type="EMBL" id="CR859033">
    <property type="protein sequence ID" value="CAH91228.1"/>
    <property type="molecule type" value="mRNA"/>
</dbReference>
<dbReference type="RefSeq" id="NP_001127390.1">
    <property type="nucleotide sequence ID" value="NM_001133918.1"/>
</dbReference>
<dbReference type="SMR" id="Q5RAI2"/>
<dbReference type="FunCoup" id="Q5RAI2">
    <property type="interactions" value="82"/>
</dbReference>
<dbReference type="STRING" id="9601.ENSPPYP00000021138"/>
<dbReference type="GlyCosmos" id="Q5RAI2">
    <property type="glycosylation" value="1 site, No reported glycans"/>
</dbReference>
<dbReference type="GeneID" id="100174457"/>
<dbReference type="KEGG" id="pon:100174457"/>
<dbReference type="CTD" id="114569"/>
<dbReference type="eggNOG" id="KOG4788">
    <property type="taxonomic scope" value="Eukaryota"/>
</dbReference>
<dbReference type="InParanoid" id="Q5RAI2"/>
<dbReference type="OrthoDB" id="8877859at2759"/>
<dbReference type="Proteomes" id="UP000001595">
    <property type="component" value="Unplaced"/>
</dbReference>
<dbReference type="GO" id="GO:0016324">
    <property type="term" value="C:apical plasma membrane"/>
    <property type="evidence" value="ECO:0007669"/>
    <property type="project" value="UniProtKB-SubCell"/>
</dbReference>
<dbReference type="GO" id="GO:0019911">
    <property type="term" value="F:structural constituent of myelin sheath"/>
    <property type="evidence" value="ECO:0007669"/>
    <property type="project" value="TreeGrafter"/>
</dbReference>
<dbReference type="GO" id="GO:0042552">
    <property type="term" value="P:myelination"/>
    <property type="evidence" value="ECO:0007669"/>
    <property type="project" value="TreeGrafter"/>
</dbReference>
<dbReference type="InterPro" id="IPR013295">
    <property type="entry name" value="MAL"/>
</dbReference>
<dbReference type="InterPro" id="IPR008253">
    <property type="entry name" value="Marvel"/>
</dbReference>
<dbReference type="InterPro" id="IPR050578">
    <property type="entry name" value="MARVEL-CKLF_proteins"/>
</dbReference>
<dbReference type="PANTHER" id="PTHR22776">
    <property type="entry name" value="MARVEL-CONTAINING POTENTIAL LIPID RAFT-ASSOCIATED PROTEIN"/>
    <property type="match status" value="1"/>
</dbReference>
<dbReference type="PANTHER" id="PTHR22776:SF42">
    <property type="entry name" value="PROTEIN MAL2"/>
    <property type="match status" value="1"/>
</dbReference>
<dbReference type="Pfam" id="PF01284">
    <property type="entry name" value="MARVEL"/>
    <property type="match status" value="1"/>
</dbReference>
<dbReference type="PRINTS" id="PR01884">
    <property type="entry name" value="MALPROTEIN"/>
</dbReference>
<dbReference type="PROSITE" id="PS51225">
    <property type="entry name" value="MARVEL"/>
    <property type="match status" value="1"/>
</dbReference>
<feature type="chain" id="PRO_0000156810" description="Protein MAL2">
    <location>
        <begin position="1"/>
        <end position="176"/>
    </location>
</feature>
<feature type="topological domain" description="Cytoplasmic" evidence="2">
    <location>
        <begin position="1"/>
        <end position="34"/>
    </location>
</feature>
<feature type="transmembrane region" description="Helical" evidence="2">
    <location>
        <begin position="35"/>
        <end position="55"/>
    </location>
</feature>
<feature type="topological domain" description="Lumenal" evidence="2">
    <location>
        <begin position="56"/>
        <end position="66"/>
    </location>
</feature>
<feature type="transmembrane region" description="Helical" evidence="2">
    <location>
        <begin position="67"/>
        <end position="87"/>
    </location>
</feature>
<feature type="topological domain" description="Cytoplasmic" evidence="2">
    <location>
        <begin position="88"/>
        <end position="102"/>
    </location>
</feature>
<feature type="transmembrane region" description="Helical" evidence="2">
    <location>
        <begin position="103"/>
        <end position="123"/>
    </location>
</feature>
<feature type="topological domain" description="Lumenal" evidence="2">
    <location>
        <begin position="124"/>
        <end position="149"/>
    </location>
</feature>
<feature type="transmembrane region" description="Helical" evidence="2">
    <location>
        <begin position="150"/>
        <end position="170"/>
    </location>
</feature>
<feature type="topological domain" description="Cytoplasmic" evidence="2">
    <location>
        <begin position="171"/>
        <end position="176"/>
    </location>
</feature>
<feature type="domain" description="MARVEL" evidence="3">
    <location>
        <begin position="31"/>
        <end position="175"/>
    </location>
</feature>
<feature type="glycosylation site" description="N-linked (GlcNAc...) asparagine" evidence="1">
    <location>
        <position position="132"/>
    </location>
</feature>
<sequence length="176" mass="19257">MSAGGASVPPPPNPAVSFPVPRVTLPAGPDILRTYSGAFVCLEILFGGLVWILVASSNVPLPLLQGWVMFVSVTAFFFSLLFLGLFLSGMVTQIDANWNFLDFAYHFTVFVFYFGAFLLEAAATSLHDLHYNITMTGQPLLNDNQYNINVAASIFAFMTTACYGCSLGLALRRWRP</sequence>
<keyword id="KW-1003">Cell membrane</keyword>
<keyword id="KW-0325">Glycoprotein</keyword>
<keyword id="KW-0472">Membrane</keyword>
<keyword id="KW-1185">Reference proteome</keyword>
<keyword id="KW-0812">Transmembrane</keyword>
<keyword id="KW-1133">Transmembrane helix</keyword>
<protein>
    <recommendedName>
        <fullName>Protein MAL2</fullName>
    </recommendedName>
</protein>
<proteinExistence type="evidence at transcript level"/>